<sequence length="73" mass="8097">MKKGIHPDYHMIDVKMTDGTVFQIRSTWGKEGEQMALEIDPLAHPAWTGGTAKLMDTGGRVSKFKNKYAGLGF</sequence>
<keyword id="KW-1185">Reference proteome</keyword>
<keyword id="KW-0687">Ribonucleoprotein</keyword>
<keyword id="KW-0689">Ribosomal protein</keyword>
<keyword id="KW-0694">RNA-binding</keyword>
<keyword id="KW-0699">rRNA-binding</keyword>
<accession>Q3IZ07</accession>
<organism>
    <name type="scientific">Cereibacter sphaeroides (strain ATCC 17023 / DSM 158 / JCM 6121 / CCUG 31486 / LMG 2827 / NBRC 12203 / NCIMB 8253 / ATH 2.4.1.)</name>
    <name type="common">Rhodobacter sphaeroides</name>
    <dbReference type="NCBI Taxonomy" id="272943"/>
    <lineage>
        <taxon>Bacteria</taxon>
        <taxon>Pseudomonadati</taxon>
        <taxon>Pseudomonadota</taxon>
        <taxon>Alphaproteobacteria</taxon>
        <taxon>Rhodobacterales</taxon>
        <taxon>Paracoccaceae</taxon>
        <taxon>Cereibacter</taxon>
    </lineage>
</organism>
<dbReference type="EMBL" id="CP000143">
    <property type="protein sequence ID" value="ABA80227.1"/>
    <property type="molecule type" value="Genomic_DNA"/>
</dbReference>
<dbReference type="RefSeq" id="WP_002721385.1">
    <property type="nucleotide sequence ID" value="NZ_CP030271.1"/>
</dbReference>
<dbReference type="RefSeq" id="YP_354128.1">
    <property type="nucleotide sequence ID" value="NC_007493.2"/>
</dbReference>
<dbReference type="SMR" id="Q3IZ07"/>
<dbReference type="STRING" id="272943.RSP_1043"/>
<dbReference type="EnsemblBacteria" id="ABA80227">
    <property type="protein sequence ID" value="ABA80227"/>
    <property type="gene ID" value="RSP_1043"/>
</dbReference>
<dbReference type="GeneID" id="67447816"/>
<dbReference type="KEGG" id="rsp:RSP_1043"/>
<dbReference type="PATRIC" id="fig|272943.9.peg.3017"/>
<dbReference type="eggNOG" id="COG0254">
    <property type="taxonomic scope" value="Bacteria"/>
</dbReference>
<dbReference type="OrthoDB" id="9803251at2"/>
<dbReference type="PhylomeDB" id="Q3IZ07"/>
<dbReference type="Proteomes" id="UP000002703">
    <property type="component" value="Chromosome 1"/>
</dbReference>
<dbReference type="GO" id="GO:1990904">
    <property type="term" value="C:ribonucleoprotein complex"/>
    <property type="evidence" value="ECO:0007669"/>
    <property type="project" value="UniProtKB-KW"/>
</dbReference>
<dbReference type="GO" id="GO:0005840">
    <property type="term" value="C:ribosome"/>
    <property type="evidence" value="ECO:0007669"/>
    <property type="project" value="UniProtKB-KW"/>
</dbReference>
<dbReference type="GO" id="GO:0019843">
    <property type="term" value="F:rRNA binding"/>
    <property type="evidence" value="ECO:0007669"/>
    <property type="project" value="UniProtKB-KW"/>
</dbReference>
<dbReference type="GO" id="GO:0003735">
    <property type="term" value="F:structural constituent of ribosome"/>
    <property type="evidence" value="ECO:0007669"/>
    <property type="project" value="InterPro"/>
</dbReference>
<dbReference type="GO" id="GO:0006412">
    <property type="term" value="P:translation"/>
    <property type="evidence" value="ECO:0007669"/>
    <property type="project" value="UniProtKB-UniRule"/>
</dbReference>
<dbReference type="Gene3D" id="4.10.830.30">
    <property type="entry name" value="Ribosomal protein L31"/>
    <property type="match status" value="1"/>
</dbReference>
<dbReference type="HAMAP" id="MF_00501">
    <property type="entry name" value="Ribosomal_bL31_1"/>
    <property type="match status" value="1"/>
</dbReference>
<dbReference type="InterPro" id="IPR034704">
    <property type="entry name" value="Ribosomal_bL28/bL31-like_sf"/>
</dbReference>
<dbReference type="InterPro" id="IPR002150">
    <property type="entry name" value="Ribosomal_bL31"/>
</dbReference>
<dbReference type="InterPro" id="IPR027491">
    <property type="entry name" value="Ribosomal_bL31_A"/>
</dbReference>
<dbReference type="InterPro" id="IPR042105">
    <property type="entry name" value="Ribosomal_bL31_sf"/>
</dbReference>
<dbReference type="NCBIfam" id="TIGR00105">
    <property type="entry name" value="L31"/>
    <property type="match status" value="1"/>
</dbReference>
<dbReference type="NCBIfam" id="NF001809">
    <property type="entry name" value="PRK00528.1"/>
    <property type="match status" value="1"/>
</dbReference>
<dbReference type="PANTHER" id="PTHR33280">
    <property type="entry name" value="50S RIBOSOMAL PROTEIN L31, CHLOROPLASTIC"/>
    <property type="match status" value="1"/>
</dbReference>
<dbReference type="PANTHER" id="PTHR33280:SF6">
    <property type="entry name" value="LARGE RIBOSOMAL SUBUNIT PROTEIN BL31A"/>
    <property type="match status" value="1"/>
</dbReference>
<dbReference type="Pfam" id="PF01197">
    <property type="entry name" value="Ribosomal_L31"/>
    <property type="match status" value="1"/>
</dbReference>
<dbReference type="PRINTS" id="PR01249">
    <property type="entry name" value="RIBOSOMALL31"/>
</dbReference>
<dbReference type="SUPFAM" id="SSF143800">
    <property type="entry name" value="L28p-like"/>
    <property type="match status" value="1"/>
</dbReference>
<dbReference type="PROSITE" id="PS01143">
    <property type="entry name" value="RIBOSOMAL_L31"/>
    <property type="match status" value="1"/>
</dbReference>
<feature type="chain" id="PRO_0000259216" description="Large ribosomal subunit protein bL31">
    <location>
        <begin position="1"/>
        <end position="73"/>
    </location>
</feature>
<protein>
    <recommendedName>
        <fullName evidence="1">Large ribosomal subunit protein bL31</fullName>
    </recommendedName>
    <alternativeName>
        <fullName evidence="2">50S ribosomal protein L31</fullName>
    </alternativeName>
</protein>
<gene>
    <name evidence="1" type="primary">rpmE</name>
    <name type="ordered locus">RHOS4_26590</name>
    <name type="ORF">RSP_1043</name>
</gene>
<name>RL31_CERS4</name>
<reference key="1">
    <citation type="submission" date="2005-09" db="EMBL/GenBank/DDBJ databases">
        <title>Complete sequence of chromosome 1 of Rhodobacter sphaeroides 2.4.1.</title>
        <authorList>
            <person name="Copeland A."/>
            <person name="Lucas S."/>
            <person name="Lapidus A."/>
            <person name="Barry K."/>
            <person name="Detter J.C."/>
            <person name="Glavina T."/>
            <person name="Hammon N."/>
            <person name="Israni S."/>
            <person name="Pitluck S."/>
            <person name="Richardson P."/>
            <person name="Mackenzie C."/>
            <person name="Choudhary M."/>
            <person name="Larimer F."/>
            <person name="Hauser L.J."/>
            <person name="Land M."/>
            <person name="Donohue T.J."/>
            <person name="Kaplan S."/>
        </authorList>
    </citation>
    <scope>NUCLEOTIDE SEQUENCE [LARGE SCALE GENOMIC DNA]</scope>
    <source>
        <strain>ATCC 17023 / DSM 158 / JCM 6121 / CCUG 31486 / LMG 2827 / NBRC 12203 / NCIMB 8253 / ATH 2.4.1.</strain>
    </source>
</reference>
<proteinExistence type="inferred from homology"/>
<evidence type="ECO:0000255" key="1">
    <source>
        <dbReference type="HAMAP-Rule" id="MF_00501"/>
    </source>
</evidence>
<evidence type="ECO:0000305" key="2"/>
<comment type="function">
    <text evidence="1">Binds the 23S rRNA.</text>
</comment>
<comment type="subunit">
    <text evidence="1">Part of the 50S ribosomal subunit.</text>
</comment>
<comment type="similarity">
    <text evidence="1">Belongs to the bacterial ribosomal protein bL31 family. Type A subfamily.</text>
</comment>